<name>HEM4_CHLP8</name>
<dbReference type="EC" id="4.2.1.75"/>
<dbReference type="EMBL" id="M96364">
    <property type="protein sequence ID" value="AAA23114.1"/>
    <property type="molecule type" value="Genomic_DNA"/>
</dbReference>
<dbReference type="EMBL" id="CP001099">
    <property type="protein sequence ID" value="ACF11153.1"/>
    <property type="molecule type" value="Genomic_DNA"/>
</dbReference>
<dbReference type="EMBL" id="U38348">
    <property type="protein sequence ID" value="AAC43974.1"/>
    <property type="molecule type" value="Genomic_DNA"/>
</dbReference>
<dbReference type="RefSeq" id="WP_012501986.1">
    <property type="nucleotide sequence ID" value="NC_011027.1"/>
</dbReference>
<dbReference type="SMR" id="Q59335"/>
<dbReference type="STRING" id="517417.Cpar_0736"/>
<dbReference type="KEGG" id="cpc:Cpar_0736"/>
<dbReference type="eggNOG" id="COG1587">
    <property type="taxonomic scope" value="Bacteria"/>
</dbReference>
<dbReference type="HOGENOM" id="CLU_011276_9_5_10"/>
<dbReference type="OrthoDB" id="9815856at2"/>
<dbReference type="UniPathway" id="UPA00251">
    <property type="reaction ID" value="UER00320"/>
</dbReference>
<dbReference type="Proteomes" id="UP000008811">
    <property type="component" value="Chromosome"/>
</dbReference>
<dbReference type="GO" id="GO:0004852">
    <property type="term" value="F:uroporphyrinogen-III synthase activity"/>
    <property type="evidence" value="ECO:0007669"/>
    <property type="project" value="UniProtKB-EC"/>
</dbReference>
<dbReference type="GO" id="GO:0006782">
    <property type="term" value="P:protoporphyrinogen IX biosynthetic process"/>
    <property type="evidence" value="ECO:0007669"/>
    <property type="project" value="UniProtKB-UniPathway"/>
</dbReference>
<dbReference type="GO" id="GO:0006780">
    <property type="term" value="P:uroporphyrinogen III biosynthetic process"/>
    <property type="evidence" value="ECO:0007669"/>
    <property type="project" value="InterPro"/>
</dbReference>
<dbReference type="CDD" id="cd06578">
    <property type="entry name" value="HemD"/>
    <property type="match status" value="1"/>
</dbReference>
<dbReference type="Gene3D" id="3.40.50.10090">
    <property type="match status" value="2"/>
</dbReference>
<dbReference type="InterPro" id="IPR036108">
    <property type="entry name" value="4pyrrol_syn_uPrphyn_synt_sf"/>
</dbReference>
<dbReference type="InterPro" id="IPR003754">
    <property type="entry name" value="4pyrrol_synth_uPrphyn_synth"/>
</dbReference>
<dbReference type="InterPro" id="IPR039793">
    <property type="entry name" value="UROS/Hem4"/>
</dbReference>
<dbReference type="PANTHER" id="PTHR38042">
    <property type="entry name" value="UROPORPHYRINOGEN-III SYNTHASE, CHLOROPLASTIC"/>
    <property type="match status" value="1"/>
</dbReference>
<dbReference type="PANTHER" id="PTHR38042:SF1">
    <property type="entry name" value="UROPORPHYRINOGEN-III SYNTHASE, CHLOROPLASTIC"/>
    <property type="match status" value="1"/>
</dbReference>
<dbReference type="Pfam" id="PF02602">
    <property type="entry name" value="HEM4"/>
    <property type="match status" value="1"/>
</dbReference>
<dbReference type="SUPFAM" id="SSF69618">
    <property type="entry name" value="HemD-like"/>
    <property type="match status" value="1"/>
</dbReference>
<proteinExistence type="inferred from homology"/>
<feature type="chain" id="PRO_0000135242" description="Uroporphyrinogen-III synthase">
    <location>
        <begin position="1"/>
        <end position="246"/>
    </location>
</feature>
<sequence>MKTVLVTRPKHQAAPFVRELEQYGLSTVVFPTIEIRPVAGWNVPDLTKFAGIFFTSPNSVQFFLKHLLQTAPDELKNLQQTRVWAVGKTTGQDLEKHGVSIEPLPKIADAVNLMADIDPAEIKGQTFLFVRGSLSLGTIPELIAEFGGTCVELTVYENLPPSLEDTQRVKDMLAEGKLDCLSFTSPSTAKNFFEAIGSKELSDSVQIAAIGTTTSGALEKMGIKVDIIPEYFDGPSFAKAIAEALK</sequence>
<evidence type="ECO:0000250" key="1"/>
<evidence type="ECO:0000305" key="2"/>
<comment type="function">
    <text evidence="1">Catalyzes cyclization of the linear tetrapyrrole, hydroxymethylbilane, to the macrocyclic uroporphyrinogen III.</text>
</comment>
<comment type="catalytic activity">
    <reaction>
        <text>hydroxymethylbilane = uroporphyrinogen III + H2O</text>
        <dbReference type="Rhea" id="RHEA:18965"/>
        <dbReference type="ChEBI" id="CHEBI:15377"/>
        <dbReference type="ChEBI" id="CHEBI:57308"/>
        <dbReference type="ChEBI" id="CHEBI:57845"/>
        <dbReference type="EC" id="4.2.1.75"/>
    </reaction>
</comment>
<comment type="pathway">
    <text>Porphyrin-containing compound metabolism; protoporphyrin-IX biosynthesis; coproporphyrinogen-III from 5-aminolevulinate: step 3/4.</text>
</comment>
<comment type="similarity">
    <text evidence="2">Belongs to the uroporphyrinogen-III synthase family.</text>
</comment>
<keyword id="KW-0456">Lyase</keyword>
<keyword id="KW-0627">Porphyrin biosynthesis</keyword>
<accession>Q59335</accession>
<accession>B3QMK0</accession>
<accession>Q59333</accession>
<protein>
    <recommendedName>
        <fullName>Uroporphyrinogen-III synthase</fullName>
        <shortName>UROS</shortName>
        <ecNumber>4.2.1.75</ecNumber>
    </recommendedName>
    <alternativeName>
        <fullName>Hydroxymethylbilane hydrolyase [cyclizing]</fullName>
    </alternativeName>
    <alternativeName>
        <fullName>Uroporphyrinogen-III cosynthase</fullName>
    </alternativeName>
</protein>
<reference key="1">
    <citation type="submission" date="1992-12" db="EMBL/GenBank/DDBJ databases">
        <authorList>
            <person name="Majumdar D."/>
            <person name="Wyche J.H."/>
        </authorList>
    </citation>
    <scope>NUCLEOTIDE SEQUENCE [GENOMIC DNA]</scope>
</reference>
<reference key="2">
    <citation type="submission" date="2008-06" db="EMBL/GenBank/DDBJ databases">
        <title>Complete sequence of Chlorobaculum parvum NCIB 8327.</title>
        <authorList>
            <consortium name="US DOE Joint Genome Institute"/>
            <person name="Lucas S."/>
            <person name="Copeland A."/>
            <person name="Lapidus A."/>
            <person name="Glavina del Rio T."/>
            <person name="Dalin E."/>
            <person name="Tice H."/>
            <person name="Bruce D."/>
            <person name="Goodwin L."/>
            <person name="Pitluck S."/>
            <person name="Schmutz J."/>
            <person name="Larimer F."/>
            <person name="Land M."/>
            <person name="Hauser L."/>
            <person name="Kyrpides N."/>
            <person name="Mikhailova N."/>
            <person name="Zhao F."/>
            <person name="Li T."/>
            <person name="Liu Z."/>
            <person name="Overmann J."/>
            <person name="Bryant D.A."/>
            <person name="Richardson P."/>
        </authorList>
    </citation>
    <scope>NUCLEOTIDE SEQUENCE [LARGE SCALE GENOMIC DNA]</scope>
    <source>
        <strain>DSM 263 / NCIMB 8327</strain>
    </source>
</reference>
<reference key="3">
    <citation type="journal article" date="1996" name="J. Biol. Chem.">
        <title>Structure and expression of the Chlorobium vibrioforme hemB gene and characterization of its encoded enzyme, porphobilinogen synthase.</title>
        <authorList>
            <person name="Rhie G.-E."/>
            <person name="Avissar Y.J."/>
            <person name="Beale S.I."/>
        </authorList>
    </citation>
    <scope>NUCLEOTIDE SEQUENCE [GENOMIC DNA] OF 187-246</scope>
</reference>
<organism>
    <name type="scientific">Chlorobaculum parvum (strain DSM 263 / NCIMB 8327)</name>
    <name type="common">Chlorobium vibrioforme subsp. thiosulfatophilum</name>
    <dbReference type="NCBI Taxonomy" id="517417"/>
    <lineage>
        <taxon>Bacteria</taxon>
        <taxon>Pseudomonadati</taxon>
        <taxon>Chlorobiota</taxon>
        <taxon>Chlorobiia</taxon>
        <taxon>Chlorobiales</taxon>
        <taxon>Chlorobiaceae</taxon>
        <taxon>Chlorobaculum</taxon>
    </lineage>
</organism>
<gene>
    <name type="primary">hemD</name>
    <name type="ordered locus">Cpar_0736</name>
</gene>